<reference key="1">
    <citation type="journal article" date="1999" name="Genomics">
        <title>A novel ribosomal S6-kinase (RSK4; RPS6KA6) is commonly deleted in patients with complex X-linked mental retardation.</title>
        <authorList>
            <person name="Yntema H.G."/>
            <person name="van den Helm B."/>
            <person name="Kissing J."/>
            <person name="van Duijnhoven G."/>
            <person name="Poppelaars F."/>
            <person name="Chelly J."/>
            <person name="Moraine C."/>
            <person name="Fryns J.-P."/>
            <person name="Hamel B.C.J."/>
            <person name="Heilbronner H."/>
            <person name="Pander H.-J."/>
            <person name="Brunner H.G."/>
            <person name="Ropers H.-H."/>
            <person name="Cremers F.P.M."/>
            <person name="van Bokhoven H."/>
        </authorList>
    </citation>
    <scope>NUCLEOTIDE SEQUENCE [MRNA] (ISOFORM 1)</scope>
</reference>
<reference key="2">
    <citation type="submission" date="2004-06" db="EMBL/GenBank/DDBJ databases">
        <title>Cloning of human full open reading frames in Gateway(TM) system entry vector (pDONR201).</title>
        <authorList>
            <person name="Ebert L."/>
            <person name="Schick M."/>
            <person name="Neubert P."/>
            <person name="Schatten R."/>
            <person name="Henze S."/>
            <person name="Korn B."/>
        </authorList>
    </citation>
    <scope>NUCLEOTIDE SEQUENCE [LARGE SCALE MRNA] (ISOFORM 1)</scope>
</reference>
<reference key="3">
    <citation type="journal article" date="2004" name="Nat. Genet.">
        <title>Complete sequencing and characterization of 21,243 full-length human cDNAs.</title>
        <authorList>
            <person name="Ota T."/>
            <person name="Suzuki Y."/>
            <person name="Nishikawa T."/>
            <person name="Otsuki T."/>
            <person name="Sugiyama T."/>
            <person name="Irie R."/>
            <person name="Wakamatsu A."/>
            <person name="Hayashi K."/>
            <person name="Sato H."/>
            <person name="Nagai K."/>
            <person name="Kimura K."/>
            <person name="Makita H."/>
            <person name="Sekine M."/>
            <person name="Obayashi M."/>
            <person name="Nishi T."/>
            <person name="Shibahara T."/>
            <person name="Tanaka T."/>
            <person name="Ishii S."/>
            <person name="Yamamoto J."/>
            <person name="Saito K."/>
            <person name="Kawai Y."/>
            <person name="Isono Y."/>
            <person name="Nakamura Y."/>
            <person name="Nagahari K."/>
            <person name="Murakami K."/>
            <person name="Yasuda T."/>
            <person name="Iwayanagi T."/>
            <person name="Wagatsuma M."/>
            <person name="Shiratori A."/>
            <person name="Sudo H."/>
            <person name="Hosoiri T."/>
            <person name="Kaku Y."/>
            <person name="Kodaira H."/>
            <person name="Kondo H."/>
            <person name="Sugawara M."/>
            <person name="Takahashi M."/>
            <person name="Kanda K."/>
            <person name="Yokoi T."/>
            <person name="Furuya T."/>
            <person name="Kikkawa E."/>
            <person name="Omura Y."/>
            <person name="Abe K."/>
            <person name="Kamihara K."/>
            <person name="Katsuta N."/>
            <person name="Sato K."/>
            <person name="Tanikawa M."/>
            <person name="Yamazaki M."/>
            <person name="Ninomiya K."/>
            <person name="Ishibashi T."/>
            <person name="Yamashita H."/>
            <person name="Murakawa K."/>
            <person name="Fujimori K."/>
            <person name="Tanai H."/>
            <person name="Kimata M."/>
            <person name="Watanabe M."/>
            <person name="Hiraoka S."/>
            <person name="Chiba Y."/>
            <person name="Ishida S."/>
            <person name="Ono Y."/>
            <person name="Takiguchi S."/>
            <person name="Watanabe S."/>
            <person name="Yosida M."/>
            <person name="Hotuta T."/>
            <person name="Kusano J."/>
            <person name="Kanehori K."/>
            <person name="Takahashi-Fujii A."/>
            <person name="Hara H."/>
            <person name="Tanase T.-O."/>
            <person name="Nomura Y."/>
            <person name="Togiya S."/>
            <person name="Komai F."/>
            <person name="Hara R."/>
            <person name="Takeuchi K."/>
            <person name="Arita M."/>
            <person name="Imose N."/>
            <person name="Musashino K."/>
            <person name="Yuuki H."/>
            <person name="Oshima A."/>
            <person name="Sasaki N."/>
            <person name="Aotsuka S."/>
            <person name="Yoshikawa Y."/>
            <person name="Matsunawa H."/>
            <person name="Ichihara T."/>
            <person name="Shiohata N."/>
            <person name="Sano S."/>
            <person name="Moriya S."/>
            <person name="Momiyama H."/>
            <person name="Satoh N."/>
            <person name="Takami S."/>
            <person name="Terashima Y."/>
            <person name="Suzuki O."/>
            <person name="Nakagawa S."/>
            <person name="Senoh A."/>
            <person name="Mizoguchi H."/>
            <person name="Goto Y."/>
            <person name="Shimizu F."/>
            <person name="Wakebe H."/>
            <person name="Hishigaki H."/>
            <person name="Watanabe T."/>
            <person name="Sugiyama A."/>
            <person name="Takemoto M."/>
            <person name="Kawakami B."/>
            <person name="Yamazaki M."/>
            <person name="Watanabe K."/>
            <person name="Kumagai A."/>
            <person name="Itakura S."/>
            <person name="Fukuzumi Y."/>
            <person name="Fujimori Y."/>
            <person name="Komiyama M."/>
            <person name="Tashiro H."/>
            <person name="Tanigami A."/>
            <person name="Fujiwara T."/>
            <person name="Ono T."/>
            <person name="Yamada K."/>
            <person name="Fujii Y."/>
            <person name="Ozaki K."/>
            <person name="Hirao M."/>
            <person name="Ohmori Y."/>
            <person name="Kawabata A."/>
            <person name="Hikiji T."/>
            <person name="Kobatake N."/>
            <person name="Inagaki H."/>
            <person name="Ikema Y."/>
            <person name="Okamoto S."/>
            <person name="Okitani R."/>
            <person name="Kawakami T."/>
            <person name="Noguchi S."/>
            <person name="Itoh T."/>
            <person name="Shigeta K."/>
            <person name="Senba T."/>
            <person name="Matsumura K."/>
            <person name="Nakajima Y."/>
            <person name="Mizuno T."/>
            <person name="Morinaga M."/>
            <person name="Sasaki M."/>
            <person name="Togashi T."/>
            <person name="Oyama M."/>
            <person name="Hata H."/>
            <person name="Watanabe M."/>
            <person name="Komatsu T."/>
            <person name="Mizushima-Sugano J."/>
            <person name="Satoh T."/>
            <person name="Shirai Y."/>
            <person name="Takahashi Y."/>
            <person name="Nakagawa K."/>
            <person name="Okumura K."/>
            <person name="Nagase T."/>
            <person name="Nomura N."/>
            <person name="Kikuchi H."/>
            <person name="Masuho Y."/>
            <person name="Yamashita R."/>
            <person name="Nakai K."/>
            <person name="Yada T."/>
            <person name="Nakamura Y."/>
            <person name="Ohara O."/>
            <person name="Isogai T."/>
            <person name="Sugano S."/>
        </authorList>
    </citation>
    <scope>NUCLEOTIDE SEQUENCE [LARGE SCALE MRNA] (ISOFORM 1)</scope>
    <source>
        <tissue>Brain</tissue>
    </source>
</reference>
<reference key="4">
    <citation type="journal article" date="2005" name="Nature">
        <title>The DNA sequence of the human X chromosome.</title>
        <authorList>
            <person name="Ross M.T."/>
            <person name="Grafham D.V."/>
            <person name="Coffey A.J."/>
            <person name="Scherer S."/>
            <person name="McLay K."/>
            <person name="Muzny D."/>
            <person name="Platzer M."/>
            <person name="Howell G.R."/>
            <person name="Burrows C."/>
            <person name="Bird C.P."/>
            <person name="Frankish A."/>
            <person name="Lovell F.L."/>
            <person name="Howe K.L."/>
            <person name="Ashurst J.L."/>
            <person name="Fulton R.S."/>
            <person name="Sudbrak R."/>
            <person name="Wen G."/>
            <person name="Jones M.C."/>
            <person name="Hurles M.E."/>
            <person name="Andrews T.D."/>
            <person name="Scott C.E."/>
            <person name="Searle S."/>
            <person name="Ramser J."/>
            <person name="Whittaker A."/>
            <person name="Deadman R."/>
            <person name="Carter N.P."/>
            <person name="Hunt S.E."/>
            <person name="Chen R."/>
            <person name="Cree A."/>
            <person name="Gunaratne P."/>
            <person name="Havlak P."/>
            <person name="Hodgson A."/>
            <person name="Metzker M.L."/>
            <person name="Richards S."/>
            <person name="Scott G."/>
            <person name="Steffen D."/>
            <person name="Sodergren E."/>
            <person name="Wheeler D.A."/>
            <person name="Worley K.C."/>
            <person name="Ainscough R."/>
            <person name="Ambrose K.D."/>
            <person name="Ansari-Lari M.A."/>
            <person name="Aradhya S."/>
            <person name="Ashwell R.I."/>
            <person name="Babbage A.K."/>
            <person name="Bagguley C.L."/>
            <person name="Ballabio A."/>
            <person name="Banerjee R."/>
            <person name="Barker G.E."/>
            <person name="Barlow K.F."/>
            <person name="Barrett I.P."/>
            <person name="Bates K.N."/>
            <person name="Beare D.M."/>
            <person name="Beasley H."/>
            <person name="Beasley O."/>
            <person name="Beck A."/>
            <person name="Bethel G."/>
            <person name="Blechschmidt K."/>
            <person name="Brady N."/>
            <person name="Bray-Allen S."/>
            <person name="Bridgeman A.M."/>
            <person name="Brown A.J."/>
            <person name="Brown M.J."/>
            <person name="Bonnin D."/>
            <person name="Bruford E.A."/>
            <person name="Buhay C."/>
            <person name="Burch P."/>
            <person name="Burford D."/>
            <person name="Burgess J."/>
            <person name="Burrill W."/>
            <person name="Burton J."/>
            <person name="Bye J.M."/>
            <person name="Carder C."/>
            <person name="Carrel L."/>
            <person name="Chako J."/>
            <person name="Chapman J.C."/>
            <person name="Chavez D."/>
            <person name="Chen E."/>
            <person name="Chen G."/>
            <person name="Chen Y."/>
            <person name="Chen Z."/>
            <person name="Chinault C."/>
            <person name="Ciccodicola A."/>
            <person name="Clark S.Y."/>
            <person name="Clarke G."/>
            <person name="Clee C.M."/>
            <person name="Clegg S."/>
            <person name="Clerc-Blankenburg K."/>
            <person name="Clifford K."/>
            <person name="Cobley V."/>
            <person name="Cole C.G."/>
            <person name="Conquer J.S."/>
            <person name="Corby N."/>
            <person name="Connor R.E."/>
            <person name="David R."/>
            <person name="Davies J."/>
            <person name="Davis C."/>
            <person name="Davis J."/>
            <person name="Delgado O."/>
            <person name="Deshazo D."/>
            <person name="Dhami P."/>
            <person name="Ding Y."/>
            <person name="Dinh H."/>
            <person name="Dodsworth S."/>
            <person name="Draper H."/>
            <person name="Dugan-Rocha S."/>
            <person name="Dunham A."/>
            <person name="Dunn M."/>
            <person name="Durbin K.J."/>
            <person name="Dutta I."/>
            <person name="Eades T."/>
            <person name="Ellwood M."/>
            <person name="Emery-Cohen A."/>
            <person name="Errington H."/>
            <person name="Evans K.L."/>
            <person name="Faulkner L."/>
            <person name="Francis F."/>
            <person name="Frankland J."/>
            <person name="Fraser A.E."/>
            <person name="Galgoczy P."/>
            <person name="Gilbert J."/>
            <person name="Gill R."/>
            <person name="Gloeckner G."/>
            <person name="Gregory S.G."/>
            <person name="Gribble S."/>
            <person name="Griffiths C."/>
            <person name="Grocock R."/>
            <person name="Gu Y."/>
            <person name="Gwilliam R."/>
            <person name="Hamilton C."/>
            <person name="Hart E.A."/>
            <person name="Hawes A."/>
            <person name="Heath P.D."/>
            <person name="Heitmann K."/>
            <person name="Hennig S."/>
            <person name="Hernandez J."/>
            <person name="Hinzmann B."/>
            <person name="Ho S."/>
            <person name="Hoffs M."/>
            <person name="Howden P.J."/>
            <person name="Huckle E.J."/>
            <person name="Hume J."/>
            <person name="Hunt P.J."/>
            <person name="Hunt A.R."/>
            <person name="Isherwood J."/>
            <person name="Jacob L."/>
            <person name="Johnson D."/>
            <person name="Jones S."/>
            <person name="de Jong P.J."/>
            <person name="Joseph S.S."/>
            <person name="Keenan S."/>
            <person name="Kelly S."/>
            <person name="Kershaw J.K."/>
            <person name="Khan Z."/>
            <person name="Kioschis P."/>
            <person name="Klages S."/>
            <person name="Knights A.J."/>
            <person name="Kosiura A."/>
            <person name="Kovar-Smith C."/>
            <person name="Laird G.K."/>
            <person name="Langford C."/>
            <person name="Lawlor S."/>
            <person name="Leversha M."/>
            <person name="Lewis L."/>
            <person name="Liu W."/>
            <person name="Lloyd C."/>
            <person name="Lloyd D.M."/>
            <person name="Loulseged H."/>
            <person name="Loveland J.E."/>
            <person name="Lovell J.D."/>
            <person name="Lozado R."/>
            <person name="Lu J."/>
            <person name="Lyne R."/>
            <person name="Ma J."/>
            <person name="Maheshwari M."/>
            <person name="Matthews L.H."/>
            <person name="McDowall J."/>
            <person name="McLaren S."/>
            <person name="McMurray A."/>
            <person name="Meidl P."/>
            <person name="Meitinger T."/>
            <person name="Milne S."/>
            <person name="Miner G."/>
            <person name="Mistry S.L."/>
            <person name="Morgan M."/>
            <person name="Morris S."/>
            <person name="Mueller I."/>
            <person name="Mullikin J.C."/>
            <person name="Nguyen N."/>
            <person name="Nordsiek G."/>
            <person name="Nyakatura G."/>
            <person name="O'dell C.N."/>
            <person name="Okwuonu G."/>
            <person name="Palmer S."/>
            <person name="Pandian R."/>
            <person name="Parker D."/>
            <person name="Parrish J."/>
            <person name="Pasternak S."/>
            <person name="Patel D."/>
            <person name="Pearce A.V."/>
            <person name="Pearson D.M."/>
            <person name="Pelan S.E."/>
            <person name="Perez L."/>
            <person name="Porter K.M."/>
            <person name="Ramsey Y."/>
            <person name="Reichwald K."/>
            <person name="Rhodes S."/>
            <person name="Ridler K.A."/>
            <person name="Schlessinger D."/>
            <person name="Schueler M.G."/>
            <person name="Sehra H.K."/>
            <person name="Shaw-Smith C."/>
            <person name="Shen H."/>
            <person name="Sheridan E.M."/>
            <person name="Shownkeen R."/>
            <person name="Skuce C.D."/>
            <person name="Smith M.L."/>
            <person name="Sotheran E.C."/>
            <person name="Steingruber H.E."/>
            <person name="Steward C.A."/>
            <person name="Storey R."/>
            <person name="Swann R.M."/>
            <person name="Swarbreck D."/>
            <person name="Tabor P.E."/>
            <person name="Taudien S."/>
            <person name="Taylor T."/>
            <person name="Teague B."/>
            <person name="Thomas K."/>
            <person name="Thorpe A."/>
            <person name="Timms K."/>
            <person name="Tracey A."/>
            <person name="Trevanion S."/>
            <person name="Tromans A.C."/>
            <person name="d'Urso M."/>
            <person name="Verduzco D."/>
            <person name="Villasana D."/>
            <person name="Waldron L."/>
            <person name="Wall M."/>
            <person name="Wang Q."/>
            <person name="Warren J."/>
            <person name="Warry G.L."/>
            <person name="Wei X."/>
            <person name="West A."/>
            <person name="Whitehead S.L."/>
            <person name="Whiteley M.N."/>
            <person name="Wilkinson J.E."/>
            <person name="Willey D.L."/>
            <person name="Williams G."/>
            <person name="Williams L."/>
            <person name="Williamson A."/>
            <person name="Williamson H."/>
            <person name="Wilming L."/>
            <person name="Woodmansey R.L."/>
            <person name="Wray P.W."/>
            <person name="Yen J."/>
            <person name="Zhang J."/>
            <person name="Zhou J."/>
            <person name="Zoghbi H."/>
            <person name="Zorilla S."/>
            <person name="Buck D."/>
            <person name="Reinhardt R."/>
            <person name="Poustka A."/>
            <person name="Rosenthal A."/>
            <person name="Lehrach H."/>
            <person name="Meindl A."/>
            <person name="Minx P.J."/>
            <person name="Hillier L.W."/>
            <person name="Willard H.F."/>
            <person name="Wilson R.K."/>
            <person name="Waterston R.H."/>
            <person name="Rice C.M."/>
            <person name="Vaudin M."/>
            <person name="Coulson A."/>
            <person name="Nelson D.L."/>
            <person name="Weinstock G."/>
            <person name="Sulston J.E."/>
            <person name="Durbin R.M."/>
            <person name="Hubbard T."/>
            <person name="Gibbs R.A."/>
            <person name="Beck S."/>
            <person name="Rogers J."/>
            <person name="Bentley D.R."/>
        </authorList>
    </citation>
    <scope>NUCLEOTIDE SEQUENCE [LARGE SCALE GENOMIC DNA]</scope>
</reference>
<reference key="5">
    <citation type="submission" date="2005-09" db="EMBL/GenBank/DDBJ databases">
        <authorList>
            <person name="Mural R.J."/>
            <person name="Istrail S."/>
            <person name="Sutton G.G."/>
            <person name="Florea L."/>
            <person name="Halpern A.L."/>
            <person name="Mobarry C.M."/>
            <person name="Lippert R."/>
            <person name="Walenz B."/>
            <person name="Shatkay H."/>
            <person name="Dew I."/>
            <person name="Miller J.R."/>
            <person name="Flanigan M.J."/>
            <person name="Edwards N.J."/>
            <person name="Bolanos R."/>
            <person name="Fasulo D."/>
            <person name="Halldorsson B.V."/>
            <person name="Hannenhalli S."/>
            <person name="Turner R."/>
            <person name="Yooseph S."/>
            <person name="Lu F."/>
            <person name="Nusskern D.R."/>
            <person name="Shue B.C."/>
            <person name="Zheng X.H."/>
            <person name="Zhong F."/>
            <person name="Delcher A.L."/>
            <person name="Huson D.H."/>
            <person name="Kravitz S.A."/>
            <person name="Mouchard L."/>
            <person name="Reinert K."/>
            <person name="Remington K.A."/>
            <person name="Clark A.G."/>
            <person name="Waterman M.S."/>
            <person name="Eichler E.E."/>
            <person name="Adams M.D."/>
            <person name="Hunkapiller M.W."/>
            <person name="Myers E.W."/>
            <person name="Venter J.C."/>
        </authorList>
    </citation>
    <scope>NUCLEOTIDE SEQUENCE [LARGE SCALE GENOMIC DNA]</scope>
</reference>
<reference key="6">
    <citation type="journal article" date="2004" name="Genome Res.">
        <title>The status, quality, and expansion of the NIH full-length cDNA project: the Mammalian Gene Collection (MGC).</title>
        <authorList>
            <consortium name="The MGC Project Team"/>
        </authorList>
    </citation>
    <scope>NUCLEOTIDE SEQUENCE [LARGE SCALE MRNA] (ISOFORM 2)</scope>
    <source>
        <tissue>Cerebellum</tissue>
    </source>
</reference>
<reference key="7">
    <citation type="journal article" date="2004" name="Nature">
        <title>A large-scale RNAi screen in human cells identifies new components of the p53 pathway.</title>
        <authorList>
            <person name="Berns K."/>
            <person name="Hijmans E.M."/>
            <person name="Mullenders J."/>
            <person name="Brummelkamp T.R."/>
            <person name="Velds A."/>
            <person name="Heimerikx M."/>
            <person name="Kerkhoven R.M."/>
            <person name="Madiredjo M."/>
            <person name="Nijkamp W."/>
            <person name="Weigelt B."/>
            <person name="Agami R."/>
            <person name="Ge W."/>
            <person name="Cavet G."/>
            <person name="Linsley P.S."/>
            <person name="Beijersbergen R.L."/>
            <person name="Bernards R."/>
        </authorList>
    </citation>
    <scope>FUNCTION IN P53/TP53 SIGNALING</scope>
</reference>
<reference key="8">
    <citation type="journal article" date="2005" name="J. Biol. Chem.">
        <title>Functional characterization of human RSK4, a new 90-kDa ribosomal S6 kinase, reveals constitutive activation in most cell types.</title>
        <authorList>
            <person name="Duemmler B.A."/>
            <person name="Hauge C."/>
            <person name="Silber J."/>
            <person name="Yntema H.G."/>
            <person name="Kruse L.S."/>
            <person name="Kofoed B."/>
            <person name="Hemmings B.A."/>
            <person name="Alessi D.R."/>
            <person name="Froedin M."/>
        </authorList>
    </citation>
    <scope>FUNCTION</scope>
    <scope>ACTIVITY REGULATION</scope>
    <scope>INTERACTION WITH MAPK3</scope>
    <scope>SUBCELLULAR LOCATION</scope>
    <scope>PHOSPHORYLATION AT SER-232; SER-372; SER-389 AND THR-581</scope>
    <scope>MUTAGENESIS OF SER-372; SER-389 AND THR-581</scope>
</reference>
<reference key="9">
    <citation type="journal article" date="2008" name="Nat. Rev. Mol. Cell Biol.">
        <title>The RSK family of kinases: emerging roles in cellular signalling.</title>
        <authorList>
            <person name="Anjum R."/>
            <person name="Blenis J."/>
        </authorList>
    </citation>
    <scope>REVIEW ON FUNCTION</scope>
</reference>
<reference key="10">
    <citation type="journal article" date="2011" name="Sci. Signal.">
        <title>System-wide temporal characterization of the proteome and phosphoproteome of human embryonic stem cell differentiation.</title>
        <authorList>
            <person name="Rigbolt K.T."/>
            <person name="Prokhorova T.A."/>
            <person name="Akimov V."/>
            <person name="Henningsen J."/>
            <person name="Johansen P.T."/>
            <person name="Kratchmarova I."/>
            <person name="Kassem M."/>
            <person name="Mann M."/>
            <person name="Olsen J.V."/>
            <person name="Blagoev B."/>
        </authorList>
    </citation>
    <scope>PHOSPHORYLATION [LARGE SCALE ANALYSIS] AT SER-389</scope>
    <scope>IDENTIFICATION BY MASS SPECTROMETRY [LARGE SCALE ANALYSIS]</scope>
</reference>
<reference key="11">
    <citation type="journal article" date="2007" name="Nature">
        <title>Patterns of somatic mutation in human cancer genomes.</title>
        <authorList>
            <person name="Greenman C."/>
            <person name="Stephens P."/>
            <person name="Smith R."/>
            <person name="Dalgliesh G.L."/>
            <person name="Hunter C."/>
            <person name="Bignell G."/>
            <person name="Davies H."/>
            <person name="Teague J."/>
            <person name="Butler A."/>
            <person name="Stevens C."/>
            <person name="Edkins S."/>
            <person name="O'Meara S."/>
            <person name="Vastrik I."/>
            <person name="Schmidt E.E."/>
            <person name="Avis T."/>
            <person name="Barthorpe S."/>
            <person name="Bhamra G."/>
            <person name="Buck G."/>
            <person name="Choudhury B."/>
            <person name="Clements J."/>
            <person name="Cole J."/>
            <person name="Dicks E."/>
            <person name="Forbes S."/>
            <person name="Gray K."/>
            <person name="Halliday K."/>
            <person name="Harrison R."/>
            <person name="Hills K."/>
            <person name="Hinton J."/>
            <person name="Jenkinson A."/>
            <person name="Jones D."/>
            <person name="Menzies A."/>
            <person name="Mironenko T."/>
            <person name="Perry J."/>
            <person name="Raine K."/>
            <person name="Richardson D."/>
            <person name="Shepherd R."/>
            <person name="Small A."/>
            <person name="Tofts C."/>
            <person name="Varian J."/>
            <person name="Webb T."/>
            <person name="West S."/>
            <person name="Widaa S."/>
            <person name="Yates A."/>
            <person name="Cahill D.P."/>
            <person name="Louis D.N."/>
            <person name="Goldstraw P."/>
            <person name="Nicholson A.G."/>
            <person name="Brasseur F."/>
            <person name="Looijenga L."/>
            <person name="Weber B.L."/>
            <person name="Chiew Y.-E."/>
            <person name="DeFazio A."/>
            <person name="Greaves M.F."/>
            <person name="Green A.R."/>
            <person name="Campbell P."/>
            <person name="Birney E."/>
            <person name="Easton D.F."/>
            <person name="Chenevix-Trench G."/>
            <person name="Tan M.-H."/>
            <person name="Khoo S.K."/>
            <person name="Teh B.T."/>
            <person name="Yuen S.T."/>
            <person name="Leung S.Y."/>
            <person name="Wooster R."/>
            <person name="Futreal P.A."/>
            <person name="Stratton M.R."/>
        </authorList>
    </citation>
    <scope>VARIANTS [LARGE SCALE ANALYSIS] CYS-140; THR-258 AND ASN-692</scope>
</reference>
<sequence length="745" mass="83872">MLPFAPQDEPWDREMEVFSGGGASSGEVNGLKMVDEPMEEGEADSCHDEGVVKEIPITHHVKEGYEKADPAQFELLKVLGQGSFGKVFLVRKKTGPDAGQLYAMKVLKKASLKVRDRVRTKMERDILVEVNHPFIVKLHYAFQTEGKLYLILDFLRGGDVFTRLSKEVLFTEEDVKFYLAELALALDHLHQLGIVYRDLKPENILLDEIGHIKLTDFGLSKESVDQEKKAYSFCGTVEYMAPEVVNRRGHSQSADWWSYGVLMFEMLTGTLPFQGKDRNETMNMILKAKLGMPQFLSAEAQSLLRMLFKRNPANRLGSEGVEEIKRHLFFANIDWDKLYKREVQPPFKPASGKPDDTFCFDPEFTAKTPKDSPGLPASANAHQLFKGFSFVATSIAEEYKITPITSANVLPIVQINGNAAQFGEVYELKEDIGVGSYSVCKRCIHATTNMEFAVKIIDKSKRDPSEEIEILMRYGQHPNIITLKDVFDDGRYVYLVTDLMKGGELLDRILKQKCFSEREASDILYVISKTVDYLHCQGVVHRDLKPSNILYMDESASADSIRICDFGFAKQLRGENGLLLTPCYTANFVAPEVLMQQGYDAACDIWSLGVLFYTMLAGYTPFANGPNDTPEEILLRIGNGKFSLSGGNWDNISDGAKDLLSHMLHMDPHQRYTAEQILKHSWITHRDQLPNDQPKRNDVSHVVKGAMVATYSALTHKTFQPVLEPVAASSLAQRRSMKKRTSTGL</sequence>
<accession>Q9UK32</accession>
<accession>B2R854</accession>
<accession>B7ZL90</accession>
<accession>Q6FHX2</accession>
<accession>Q8WX28</accession>
<accession>Q9H4S6</accession>
<proteinExistence type="evidence at protein level"/>
<protein>
    <recommendedName>
        <fullName>Ribosomal protein S6 kinase alpha-6</fullName>
        <shortName>S6K-alpha-6</shortName>
        <ecNumber>2.7.11.1</ecNumber>
    </recommendedName>
    <alternativeName>
        <fullName>90 kDa ribosomal protein S6 kinase 6</fullName>
        <shortName>p90-RSK 6</shortName>
        <shortName>p90RSK6</shortName>
    </alternativeName>
    <alternativeName>
        <fullName>Ribosomal S6 kinase 4</fullName>
        <shortName>RSK-4</shortName>
    </alternativeName>
    <alternativeName>
        <fullName>pp90RSK4</fullName>
    </alternativeName>
</protein>
<organism>
    <name type="scientific">Homo sapiens</name>
    <name type="common">Human</name>
    <dbReference type="NCBI Taxonomy" id="9606"/>
    <lineage>
        <taxon>Eukaryota</taxon>
        <taxon>Metazoa</taxon>
        <taxon>Chordata</taxon>
        <taxon>Craniata</taxon>
        <taxon>Vertebrata</taxon>
        <taxon>Euteleostomi</taxon>
        <taxon>Mammalia</taxon>
        <taxon>Eutheria</taxon>
        <taxon>Euarchontoglires</taxon>
        <taxon>Primates</taxon>
        <taxon>Haplorrhini</taxon>
        <taxon>Catarrhini</taxon>
        <taxon>Hominidae</taxon>
        <taxon>Homo</taxon>
    </lineage>
</organism>
<keyword id="KW-0002">3D-structure</keyword>
<keyword id="KW-0025">Alternative splicing</keyword>
<keyword id="KW-0067">ATP-binding</keyword>
<keyword id="KW-0963">Cytoplasm</keyword>
<keyword id="KW-0418">Kinase</keyword>
<keyword id="KW-0460">Magnesium</keyword>
<keyword id="KW-0479">Metal-binding</keyword>
<keyword id="KW-0547">Nucleotide-binding</keyword>
<keyword id="KW-0539">Nucleus</keyword>
<keyword id="KW-0597">Phosphoprotein</keyword>
<keyword id="KW-1267">Proteomics identification</keyword>
<keyword id="KW-1185">Reference proteome</keyword>
<keyword id="KW-0677">Repeat</keyword>
<keyword id="KW-0723">Serine/threonine-protein kinase</keyword>
<keyword id="KW-0808">Transferase</keyword>
<evidence type="ECO:0000250" key="1"/>
<evidence type="ECO:0000255" key="2">
    <source>
        <dbReference type="PROSITE-ProRule" id="PRU00159"/>
    </source>
</evidence>
<evidence type="ECO:0000255" key="3">
    <source>
        <dbReference type="PROSITE-ProRule" id="PRU00618"/>
    </source>
</evidence>
<evidence type="ECO:0000256" key="4">
    <source>
        <dbReference type="SAM" id="MobiDB-lite"/>
    </source>
</evidence>
<evidence type="ECO:0000269" key="5">
    <source>
    </source>
</evidence>
<evidence type="ECO:0000269" key="6">
    <source>
    </source>
</evidence>
<evidence type="ECO:0000269" key="7">
    <source>
    </source>
</evidence>
<evidence type="ECO:0000303" key="8">
    <source>
    </source>
</evidence>
<evidence type="ECO:0000305" key="9"/>
<evidence type="ECO:0007744" key="10">
    <source>
    </source>
</evidence>
<evidence type="ECO:0007829" key="11">
    <source>
        <dbReference type="PDB" id="6G77"/>
    </source>
</evidence>
<evidence type="ECO:0007829" key="12">
    <source>
        <dbReference type="PDB" id="6G78"/>
    </source>
</evidence>
<feature type="chain" id="PRO_0000086209" description="Ribosomal protein S6 kinase alpha-6">
    <location>
        <begin position="1"/>
        <end position="745"/>
    </location>
</feature>
<feature type="domain" description="Protein kinase 1" evidence="2">
    <location>
        <begin position="73"/>
        <end position="330"/>
    </location>
</feature>
<feature type="domain" description="AGC-kinase C-terminal" evidence="3">
    <location>
        <begin position="331"/>
        <end position="400"/>
    </location>
</feature>
<feature type="domain" description="Protein kinase 2" evidence="2">
    <location>
        <begin position="426"/>
        <end position="683"/>
    </location>
</feature>
<feature type="region of interest" description="Disordered" evidence="4">
    <location>
        <begin position="1"/>
        <end position="28"/>
    </location>
</feature>
<feature type="active site" description="Proton acceptor" evidence="1">
    <location>
        <position position="198"/>
    </location>
</feature>
<feature type="active site" description="Proton acceptor" evidence="1">
    <location>
        <position position="543"/>
    </location>
</feature>
<feature type="binding site" evidence="2">
    <location>
        <begin position="79"/>
        <end position="87"/>
    </location>
    <ligand>
        <name>ATP</name>
        <dbReference type="ChEBI" id="CHEBI:30616"/>
    </ligand>
</feature>
<feature type="binding site" evidence="2">
    <location>
        <position position="105"/>
    </location>
    <ligand>
        <name>ATP</name>
        <dbReference type="ChEBI" id="CHEBI:30616"/>
    </ligand>
</feature>
<feature type="binding site" evidence="2">
    <location>
        <begin position="432"/>
        <end position="440"/>
    </location>
    <ligand>
        <name>ATP</name>
        <dbReference type="ChEBI" id="CHEBI:30616"/>
    </ligand>
</feature>
<feature type="binding site" evidence="2">
    <location>
        <position position="455"/>
    </location>
    <ligand>
        <name>ATP</name>
        <dbReference type="ChEBI" id="CHEBI:30616"/>
    </ligand>
</feature>
<feature type="modified residue" description="Phosphoserine" evidence="6">
    <location>
        <position position="232"/>
    </location>
</feature>
<feature type="modified residue" description="Phosphoserine" evidence="6">
    <location>
        <position position="372"/>
    </location>
</feature>
<feature type="modified residue" description="Phosphoserine" evidence="6 10">
    <location>
        <position position="389"/>
    </location>
</feature>
<feature type="modified residue" description="Phosphothreonine" evidence="6">
    <location>
        <position position="581"/>
    </location>
</feature>
<feature type="splice variant" id="VSP_056181" description="In isoform 2." evidence="8">
    <original>MLPFAPQDEPWDREMEVFSGGGASSGE</original>
    <variation>MGLSTSAIWKNTRVEIVNPYEVKRKVK</variation>
    <location>
        <begin position="1"/>
        <end position="27"/>
    </location>
</feature>
<feature type="sequence variant" id="VAR_040637" description="In a lung large cell carcinoma sample; somatic mutation." evidence="7">
    <original>Y</original>
    <variation>C</variation>
    <location>
        <position position="140"/>
    </location>
</feature>
<feature type="sequence variant" id="VAR_040638" description="In a lung adenocarcinoma sample; somatic mutation." evidence="7">
    <original>S</original>
    <variation>T</variation>
    <location>
        <position position="258"/>
    </location>
</feature>
<feature type="sequence variant" id="VAR_030670" description="In dbSNP:rs6616890." evidence="7">
    <original>D</original>
    <variation>N</variation>
    <location>
        <position position="692"/>
    </location>
</feature>
<feature type="mutagenesis site" description="No effect on activity." evidence="6">
    <original>S</original>
    <variation>A</variation>
    <location>
        <position position="372"/>
    </location>
</feature>
<feature type="mutagenesis site" description="Strongly decreases activity." evidence="6">
    <original>S</original>
    <variation>A</variation>
    <location>
        <position position="389"/>
    </location>
</feature>
<feature type="mutagenesis site" description="No effect on activity." evidence="6">
    <original>T</original>
    <variation>A</variation>
    <location>
        <position position="581"/>
    </location>
</feature>
<feature type="sequence conflict" description="In Ref. 2; CAG38803." evidence="9" ref="2">
    <original>D</original>
    <variation>G</variation>
    <location>
        <position position="116"/>
    </location>
</feature>
<feature type="sequence conflict" description="In Ref. 2; CAG38803." evidence="9" ref="2">
    <original>F</original>
    <variation>L</variation>
    <location>
        <position position="295"/>
    </location>
</feature>
<feature type="sequence conflict" description="In Ref. 2; CAG38803." evidence="9" ref="2">
    <original>R</original>
    <variation>G</variation>
    <location>
        <position position="341"/>
    </location>
</feature>
<feature type="strand" evidence="11">
    <location>
        <begin position="52"/>
        <end position="56"/>
    </location>
</feature>
<feature type="helix" evidence="11">
    <location>
        <begin position="70"/>
        <end position="72"/>
    </location>
</feature>
<feature type="strand" evidence="11">
    <location>
        <begin position="73"/>
        <end position="81"/>
    </location>
</feature>
<feature type="strand" evidence="11">
    <location>
        <begin position="86"/>
        <end position="92"/>
    </location>
</feature>
<feature type="turn" evidence="11">
    <location>
        <begin position="96"/>
        <end position="99"/>
    </location>
</feature>
<feature type="strand" evidence="11">
    <location>
        <begin position="101"/>
        <end position="115"/>
    </location>
</feature>
<feature type="helix" evidence="11">
    <location>
        <begin position="126"/>
        <end position="129"/>
    </location>
</feature>
<feature type="strand" evidence="11">
    <location>
        <begin position="138"/>
        <end position="144"/>
    </location>
</feature>
<feature type="strand" evidence="11">
    <location>
        <begin position="147"/>
        <end position="152"/>
    </location>
</feature>
<feature type="helix" evidence="11">
    <location>
        <begin position="160"/>
        <end position="165"/>
    </location>
</feature>
<feature type="helix" evidence="11">
    <location>
        <begin position="172"/>
        <end position="191"/>
    </location>
</feature>
<feature type="helix" evidence="11">
    <location>
        <begin position="201"/>
        <end position="203"/>
    </location>
</feature>
<feature type="strand" evidence="11">
    <location>
        <begin position="204"/>
        <end position="206"/>
    </location>
</feature>
<feature type="strand" evidence="11">
    <location>
        <begin position="208"/>
        <end position="210"/>
    </location>
</feature>
<feature type="strand" evidence="11">
    <location>
        <begin position="212"/>
        <end position="215"/>
    </location>
</feature>
<feature type="strand" evidence="11">
    <location>
        <begin position="220"/>
        <end position="222"/>
    </location>
</feature>
<feature type="helix" evidence="11">
    <location>
        <begin position="226"/>
        <end position="230"/>
    </location>
</feature>
<feature type="helix" evidence="11">
    <location>
        <begin position="237"/>
        <end position="239"/>
    </location>
</feature>
<feature type="helix" evidence="11">
    <location>
        <begin position="242"/>
        <end position="245"/>
    </location>
</feature>
<feature type="helix" evidence="11">
    <location>
        <begin position="252"/>
        <end position="268"/>
    </location>
</feature>
<feature type="helix" evidence="11">
    <location>
        <begin position="278"/>
        <end position="287"/>
    </location>
</feature>
<feature type="helix" evidence="11">
    <location>
        <begin position="298"/>
        <end position="307"/>
    </location>
</feature>
<feature type="turn" evidence="12">
    <location>
        <begin position="312"/>
        <end position="314"/>
    </location>
</feature>
<feature type="turn" evidence="11">
    <location>
        <begin position="316"/>
        <end position="319"/>
    </location>
</feature>
<feature type="helix" evidence="11">
    <location>
        <begin position="322"/>
        <end position="325"/>
    </location>
</feature>
<feature type="helix" evidence="11">
    <location>
        <begin position="328"/>
        <end position="330"/>
    </location>
</feature>
<feature type="helix" evidence="11">
    <location>
        <begin position="335"/>
        <end position="339"/>
    </location>
</feature>
<comment type="function">
    <text evidence="5 6">Constitutively active serine/threonine-protein kinase that exhibits growth-factor-independent kinase activity and that may participate in p53/TP53-dependent cell growth arrest signaling and play an inhibitory role during embryogenesis.</text>
</comment>
<comment type="catalytic activity">
    <reaction>
        <text>L-seryl-[protein] + ATP = O-phospho-L-seryl-[protein] + ADP + H(+)</text>
        <dbReference type="Rhea" id="RHEA:17989"/>
        <dbReference type="Rhea" id="RHEA-COMP:9863"/>
        <dbReference type="Rhea" id="RHEA-COMP:11604"/>
        <dbReference type="ChEBI" id="CHEBI:15378"/>
        <dbReference type="ChEBI" id="CHEBI:29999"/>
        <dbReference type="ChEBI" id="CHEBI:30616"/>
        <dbReference type="ChEBI" id="CHEBI:83421"/>
        <dbReference type="ChEBI" id="CHEBI:456216"/>
        <dbReference type="EC" id="2.7.11.1"/>
    </reaction>
</comment>
<comment type="catalytic activity">
    <reaction>
        <text>L-threonyl-[protein] + ATP = O-phospho-L-threonyl-[protein] + ADP + H(+)</text>
        <dbReference type="Rhea" id="RHEA:46608"/>
        <dbReference type="Rhea" id="RHEA-COMP:11060"/>
        <dbReference type="Rhea" id="RHEA-COMP:11605"/>
        <dbReference type="ChEBI" id="CHEBI:15378"/>
        <dbReference type="ChEBI" id="CHEBI:30013"/>
        <dbReference type="ChEBI" id="CHEBI:30616"/>
        <dbReference type="ChEBI" id="CHEBI:61977"/>
        <dbReference type="ChEBI" id="CHEBI:456216"/>
        <dbReference type="EC" id="2.7.11.1"/>
    </reaction>
</comment>
<comment type="cofactor">
    <cofactor evidence="1">
        <name>Mg(2+)</name>
        <dbReference type="ChEBI" id="CHEBI:18420"/>
    </cofactor>
</comment>
<comment type="activity regulation">
    <text evidence="6">Constitutively activated by phosphorylation at Ser-232, Ser-372, and Ser-389 in serum-starved cells. Does not require growth factor stimulation for significant kinase activity.</text>
</comment>
<comment type="subunit">
    <text>Forms a complex with MAPK3/ERK1 but not with MAPK9 or MAPK14 in serum-starved cells.</text>
</comment>
<comment type="interaction">
    <interactant intactId="EBI-722467">
        <id>Q9UK32</id>
    </interactant>
    <interactant intactId="EBI-7082156">
        <id>Q7Z698</id>
        <label>SPRED2</label>
    </interactant>
    <organismsDiffer>false</organismsDiffer>
    <experiments>3</experiments>
</comment>
<comment type="subcellular location">
    <subcellularLocation>
        <location evidence="6">Cytoplasm</location>
        <location evidence="6">Cytosol</location>
    </subcellularLocation>
    <subcellularLocation>
        <location evidence="6">Nucleus</location>
    </subcellularLocation>
    <text>Predominantly cytosolic.</text>
</comment>
<comment type="alternative products">
    <event type="alternative splicing"/>
    <isoform>
        <id>Q9UK32-1</id>
        <name>1</name>
        <sequence type="displayed"/>
    </isoform>
    <isoform>
        <id>Q9UK32-2</id>
        <name>2</name>
        <sequence type="described" ref="VSP_056181"/>
    </isoform>
</comment>
<comment type="PTM">
    <text evidence="6">Phosphorylated at Ser-232, Ser-372, and Ser-389 in serum-starved cells.</text>
</comment>
<comment type="similarity">
    <text evidence="9">Belongs to the protein kinase superfamily. AGC Ser/Thr protein kinase family. S6 kinase subfamily.</text>
</comment>
<dbReference type="EC" id="2.7.11.1"/>
<dbReference type="EMBL" id="AF184965">
    <property type="protein sequence ID" value="AAF13190.1"/>
    <property type="molecule type" value="mRNA"/>
</dbReference>
<dbReference type="EMBL" id="CR536566">
    <property type="protein sequence ID" value="CAG38803.1"/>
    <property type="molecule type" value="mRNA"/>
</dbReference>
<dbReference type="EMBL" id="AK313240">
    <property type="protein sequence ID" value="BAG36051.1"/>
    <property type="molecule type" value="mRNA"/>
</dbReference>
<dbReference type="EMBL" id="AL389887">
    <property type="status" value="NOT_ANNOTATED_CDS"/>
    <property type="molecule type" value="Genomic_DNA"/>
</dbReference>
<dbReference type="EMBL" id="AL354653">
    <property type="status" value="NOT_ANNOTATED_CDS"/>
    <property type="molecule type" value="Genomic_DNA"/>
</dbReference>
<dbReference type="EMBL" id="CH471104">
    <property type="protein sequence ID" value="EAW98575.1"/>
    <property type="molecule type" value="Genomic_DNA"/>
</dbReference>
<dbReference type="EMBL" id="BC143648">
    <property type="protein sequence ID" value="AAI43649.1"/>
    <property type="molecule type" value="mRNA"/>
</dbReference>
<dbReference type="CCDS" id="CCDS14451.1">
    <molecule id="Q9UK32-1"/>
</dbReference>
<dbReference type="CCDS" id="CCDS83480.1">
    <molecule id="Q9UK32-2"/>
</dbReference>
<dbReference type="RefSeq" id="NP_001317441.1">
    <molecule id="Q9UK32-2"/>
    <property type="nucleotide sequence ID" value="NM_001330512.1"/>
</dbReference>
<dbReference type="RefSeq" id="NP_055311.1">
    <molecule id="Q9UK32-1"/>
    <property type="nucleotide sequence ID" value="NM_014496.5"/>
</dbReference>
<dbReference type="RefSeq" id="XP_011529219.1">
    <molecule id="Q9UK32-2"/>
    <property type="nucleotide sequence ID" value="XM_011530917.3"/>
</dbReference>
<dbReference type="RefSeq" id="XP_054182824.1">
    <molecule id="Q9UK32-2"/>
    <property type="nucleotide sequence ID" value="XM_054326849.1"/>
</dbReference>
<dbReference type="PDB" id="6G76">
    <property type="method" value="X-ray"/>
    <property type="resolution" value="3.00 A"/>
    <property type="chains" value="A/B=48-349"/>
</dbReference>
<dbReference type="PDB" id="6G77">
    <property type="method" value="X-ray"/>
    <property type="resolution" value="2.50 A"/>
    <property type="chains" value="A/B=48-349"/>
</dbReference>
<dbReference type="PDB" id="6G78">
    <property type="method" value="X-ray"/>
    <property type="resolution" value="2.50 A"/>
    <property type="chains" value="A/B=48-349"/>
</dbReference>
<dbReference type="PDBsum" id="6G76"/>
<dbReference type="PDBsum" id="6G77"/>
<dbReference type="PDBsum" id="6G78"/>
<dbReference type="SMR" id="Q9UK32"/>
<dbReference type="BioGRID" id="118144">
    <property type="interactions" value="70"/>
</dbReference>
<dbReference type="FunCoup" id="Q9UK32">
    <property type="interactions" value="1567"/>
</dbReference>
<dbReference type="IntAct" id="Q9UK32">
    <property type="interactions" value="46"/>
</dbReference>
<dbReference type="MINT" id="Q9UK32"/>
<dbReference type="STRING" id="9606.ENSP00000262752"/>
<dbReference type="BindingDB" id="Q9UK32"/>
<dbReference type="ChEMBL" id="CHEMBL4924"/>
<dbReference type="DrugBank" id="DB12010">
    <property type="generic name" value="Fostamatinib"/>
</dbReference>
<dbReference type="DrugCentral" id="Q9UK32"/>
<dbReference type="GuidetoPHARMACOLOGY" id="1530"/>
<dbReference type="GlyGen" id="Q9UK32">
    <property type="glycosylation" value="1 site, 1 O-linked glycan (1 site)"/>
</dbReference>
<dbReference type="iPTMnet" id="Q9UK32"/>
<dbReference type="PhosphoSitePlus" id="Q9UK32"/>
<dbReference type="BioMuta" id="RPS6KA6"/>
<dbReference type="DMDM" id="11133131"/>
<dbReference type="CPTAC" id="CPTAC-2974"/>
<dbReference type="CPTAC" id="CPTAC-2975"/>
<dbReference type="jPOST" id="Q9UK32"/>
<dbReference type="MassIVE" id="Q9UK32"/>
<dbReference type="PaxDb" id="9606-ENSP00000262752"/>
<dbReference type="PeptideAtlas" id="Q9UK32"/>
<dbReference type="ProteomicsDB" id="7217"/>
<dbReference type="ProteomicsDB" id="84712">
    <molecule id="Q9UK32-1"/>
</dbReference>
<dbReference type="Antibodypedia" id="489">
    <property type="antibodies" value="249 antibodies from 31 providers"/>
</dbReference>
<dbReference type="DNASU" id="27330"/>
<dbReference type="Ensembl" id="ENST00000262752.5">
    <molecule id="Q9UK32-1"/>
    <property type="protein sequence ID" value="ENSP00000262752.2"/>
    <property type="gene ID" value="ENSG00000072133.12"/>
</dbReference>
<dbReference type="Ensembl" id="ENST00000620340.4">
    <molecule id="Q9UK32-2"/>
    <property type="protein sequence ID" value="ENSP00000483896.1"/>
    <property type="gene ID" value="ENSG00000072133.12"/>
</dbReference>
<dbReference type="GeneID" id="27330"/>
<dbReference type="KEGG" id="hsa:27330"/>
<dbReference type="MANE-Select" id="ENST00000262752.5">
    <property type="protein sequence ID" value="ENSP00000262752.2"/>
    <property type="RefSeq nucleotide sequence ID" value="NM_014496.5"/>
    <property type="RefSeq protein sequence ID" value="NP_055311.1"/>
</dbReference>
<dbReference type="UCSC" id="uc004eej.3">
    <molecule id="Q9UK32-1"/>
    <property type="organism name" value="human"/>
</dbReference>
<dbReference type="AGR" id="HGNC:10435"/>
<dbReference type="CTD" id="27330"/>
<dbReference type="DisGeNET" id="27330"/>
<dbReference type="GeneCards" id="RPS6KA6"/>
<dbReference type="HGNC" id="HGNC:10435">
    <property type="gene designation" value="RPS6KA6"/>
</dbReference>
<dbReference type="HPA" id="ENSG00000072133">
    <property type="expression patterns" value="Low tissue specificity"/>
</dbReference>
<dbReference type="MIM" id="300303">
    <property type="type" value="gene"/>
</dbReference>
<dbReference type="neXtProt" id="NX_Q9UK32"/>
<dbReference type="OpenTargets" id="ENSG00000072133"/>
<dbReference type="PharmGKB" id="PA34850"/>
<dbReference type="VEuPathDB" id="HostDB:ENSG00000072133"/>
<dbReference type="eggNOG" id="KOG0603">
    <property type="taxonomic scope" value="Eukaryota"/>
</dbReference>
<dbReference type="GeneTree" id="ENSGT00940000159242"/>
<dbReference type="HOGENOM" id="CLU_000288_58_3_1"/>
<dbReference type="InParanoid" id="Q9UK32"/>
<dbReference type="OMA" id="HSWITCK"/>
<dbReference type="OrthoDB" id="63267at2759"/>
<dbReference type="PAN-GO" id="Q9UK32">
    <property type="GO annotations" value="5 GO annotations based on evolutionary models"/>
</dbReference>
<dbReference type="PhylomeDB" id="Q9UK32"/>
<dbReference type="TreeFam" id="TF313438"/>
<dbReference type="BRENDA" id="2.7.11.1">
    <property type="organism ID" value="2681"/>
</dbReference>
<dbReference type="PathwayCommons" id="Q9UK32"/>
<dbReference type="Reactome" id="R-HSA-437239">
    <property type="pathway name" value="Recycling pathway of L1"/>
</dbReference>
<dbReference type="Reactome" id="R-HSA-442742">
    <property type="pathway name" value="CREB1 phosphorylation through NMDA receptor-mediated activation of RAS signaling"/>
</dbReference>
<dbReference type="Reactome" id="R-HSA-444257">
    <property type="pathway name" value="RSK activation"/>
</dbReference>
<dbReference type="SignaLink" id="Q9UK32"/>
<dbReference type="SIGNOR" id="Q9UK32"/>
<dbReference type="BioGRID-ORCS" id="27330">
    <property type="hits" value="15 hits in 802 CRISPR screens"/>
</dbReference>
<dbReference type="ChiTaRS" id="RPS6KA6">
    <property type="organism name" value="human"/>
</dbReference>
<dbReference type="GenomeRNAi" id="27330"/>
<dbReference type="Pharos" id="Q9UK32">
    <property type="development level" value="Tchem"/>
</dbReference>
<dbReference type="PRO" id="PR:Q9UK32"/>
<dbReference type="Proteomes" id="UP000005640">
    <property type="component" value="Chromosome X"/>
</dbReference>
<dbReference type="RNAct" id="Q9UK32">
    <property type="molecule type" value="protein"/>
</dbReference>
<dbReference type="Bgee" id="ENSG00000072133">
    <property type="expression patterns" value="Expressed in buccal mucosa cell and 145 other cell types or tissues"/>
</dbReference>
<dbReference type="GO" id="GO:0005737">
    <property type="term" value="C:cytoplasm"/>
    <property type="evidence" value="ECO:0000318"/>
    <property type="project" value="GO_Central"/>
</dbReference>
<dbReference type="GO" id="GO:0005829">
    <property type="term" value="C:cytosol"/>
    <property type="evidence" value="ECO:0007669"/>
    <property type="project" value="UniProtKB-SubCell"/>
</dbReference>
<dbReference type="GO" id="GO:0001650">
    <property type="term" value="C:fibrillar center"/>
    <property type="evidence" value="ECO:0000314"/>
    <property type="project" value="HPA"/>
</dbReference>
<dbReference type="GO" id="GO:0005739">
    <property type="term" value="C:mitochondrion"/>
    <property type="evidence" value="ECO:0000314"/>
    <property type="project" value="HPA"/>
</dbReference>
<dbReference type="GO" id="GO:0005730">
    <property type="term" value="C:nucleolus"/>
    <property type="evidence" value="ECO:0000314"/>
    <property type="project" value="HPA"/>
</dbReference>
<dbReference type="GO" id="GO:0005654">
    <property type="term" value="C:nucleoplasm"/>
    <property type="evidence" value="ECO:0000314"/>
    <property type="project" value="HPA"/>
</dbReference>
<dbReference type="GO" id="GO:0005524">
    <property type="term" value="F:ATP binding"/>
    <property type="evidence" value="ECO:0007669"/>
    <property type="project" value="UniProtKB-KW"/>
</dbReference>
<dbReference type="GO" id="GO:0000287">
    <property type="term" value="F:magnesium ion binding"/>
    <property type="evidence" value="ECO:0007669"/>
    <property type="project" value="InterPro"/>
</dbReference>
<dbReference type="GO" id="GO:0004672">
    <property type="term" value="F:protein kinase activity"/>
    <property type="evidence" value="ECO:0000304"/>
    <property type="project" value="ProtInc"/>
</dbReference>
<dbReference type="GO" id="GO:0106310">
    <property type="term" value="F:protein serine kinase activity"/>
    <property type="evidence" value="ECO:0007669"/>
    <property type="project" value="RHEA"/>
</dbReference>
<dbReference type="GO" id="GO:0004711">
    <property type="term" value="F:ribosomal protein S6 kinase activity"/>
    <property type="evidence" value="ECO:0000318"/>
    <property type="project" value="GO_Central"/>
</dbReference>
<dbReference type="GO" id="GO:0007417">
    <property type="term" value="P:central nervous system development"/>
    <property type="evidence" value="ECO:0000304"/>
    <property type="project" value="ProtInc"/>
</dbReference>
<dbReference type="GO" id="GO:0030330">
    <property type="term" value="P:DNA damage response, signal transduction by p53 class mediator"/>
    <property type="evidence" value="ECO:0000315"/>
    <property type="project" value="UniProtKB"/>
</dbReference>
<dbReference type="GO" id="GO:0045992">
    <property type="term" value="P:negative regulation of embryonic development"/>
    <property type="evidence" value="ECO:0000250"/>
    <property type="project" value="UniProtKB"/>
</dbReference>
<dbReference type="GO" id="GO:0070373">
    <property type="term" value="P:negative regulation of ERK1 and ERK2 cascade"/>
    <property type="evidence" value="ECO:0000250"/>
    <property type="project" value="UniProtKB"/>
</dbReference>
<dbReference type="GO" id="GO:2000381">
    <property type="term" value="P:negative regulation of mesoderm development"/>
    <property type="evidence" value="ECO:0000250"/>
    <property type="project" value="UniProtKB"/>
</dbReference>
<dbReference type="GO" id="GO:0007165">
    <property type="term" value="P:signal transduction"/>
    <property type="evidence" value="ECO:0000304"/>
    <property type="project" value="ProtInc"/>
</dbReference>
<dbReference type="GO" id="GO:0038202">
    <property type="term" value="P:TORC1 signaling"/>
    <property type="evidence" value="ECO:0000318"/>
    <property type="project" value="GO_Central"/>
</dbReference>
<dbReference type="CDD" id="cd14177">
    <property type="entry name" value="STKc_RSK4_C"/>
    <property type="match status" value="1"/>
</dbReference>
<dbReference type="CDD" id="cd05582">
    <property type="entry name" value="STKc_RSK_N"/>
    <property type="match status" value="1"/>
</dbReference>
<dbReference type="FunFam" id="1.10.510.10:FF:000010">
    <property type="entry name" value="Ribosomal protein S6 kinase"/>
    <property type="match status" value="1"/>
</dbReference>
<dbReference type="FunFam" id="1.10.510.10:FF:000041">
    <property type="entry name" value="Ribosomal protein S6 kinase"/>
    <property type="match status" value="1"/>
</dbReference>
<dbReference type="FunFam" id="3.30.200.20:FF:000013">
    <property type="entry name" value="Ribosomal protein S6 kinase"/>
    <property type="match status" value="1"/>
</dbReference>
<dbReference type="FunFam" id="3.30.200.20:FF:000121">
    <property type="entry name" value="Ribosomal protein S6 kinase"/>
    <property type="match status" value="1"/>
</dbReference>
<dbReference type="Gene3D" id="3.30.200.20">
    <property type="entry name" value="Phosphorylase Kinase, domain 1"/>
    <property type="match status" value="2"/>
</dbReference>
<dbReference type="Gene3D" id="1.10.510.10">
    <property type="entry name" value="Transferase(Phosphotransferase) domain 1"/>
    <property type="match status" value="2"/>
</dbReference>
<dbReference type="InterPro" id="IPR000961">
    <property type="entry name" value="AGC-kinase_C"/>
</dbReference>
<dbReference type="InterPro" id="IPR011009">
    <property type="entry name" value="Kinase-like_dom_sf"/>
</dbReference>
<dbReference type="InterPro" id="IPR017892">
    <property type="entry name" value="Pkinase_C"/>
</dbReference>
<dbReference type="InterPro" id="IPR000719">
    <property type="entry name" value="Prot_kinase_dom"/>
</dbReference>
<dbReference type="InterPro" id="IPR017441">
    <property type="entry name" value="Protein_kinase_ATP_BS"/>
</dbReference>
<dbReference type="InterPro" id="IPR016239">
    <property type="entry name" value="Ribosomal_S6_kinase_II"/>
</dbReference>
<dbReference type="InterPro" id="IPR041906">
    <property type="entry name" value="RSK_N"/>
</dbReference>
<dbReference type="InterPro" id="IPR008271">
    <property type="entry name" value="Ser/Thr_kinase_AS"/>
</dbReference>
<dbReference type="PANTHER" id="PTHR24351">
    <property type="entry name" value="RIBOSOMAL PROTEIN S6 KINASE"/>
    <property type="match status" value="1"/>
</dbReference>
<dbReference type="Pfam" id="PF00069">
    <property type="entry name" value="Pkinase"/>
    <property type="match status" value="2"/>
</dbReference>
<dbReference type="Pfam" id="PF00433">
    <property type="entry name" value="Pkinase_C"/>
    <property type="match status" value="1"/>
</dbReference>
<dbReference type="PIRSF" id="PIRSF000606">
    <property type="entry name" value="Ribsml_S6_kin_2"/>
    <property type="match status" value="1"/>
</dbReference>
<dbReference type="SMART" id="SM00133">
    <property type="entry name" value="S_TK_X"/>
    <property type="match status" value="1"/>
</dbReference>
<dbReference type="SMART" id="SM00220">
    <property type="entry name" value="S_TKc"/>
    <property type="match status" value="2"/>
</dbReference>
<dbReference type="SUPFAM" id="SSF56112">
    <property type="entry name" value="Protein kinase-like (PK-like)"/>
    <property type="match status" value="2"/>
</dbReference>
<dbReference type="PROSITE" id="PS51285">
    <property type="entry name" value="AGC_KINASE_CTER"/>
    <property type="match status" value="1"/>
</dbReference>
<dbReference type="PROSITE" id="PS00107">
    <property type="entry name" value="PROTEIN_KINASE_ATP"/>
    <property type="match status" value="2"/>
</dbReference>
<dbReference type="PROSITE" id="PS50011">
    <property type="entry name" value="PROTEIN_KINASE_DOM"/>
    <property type="match status" value="2"/>
</dbReference>
<dbReference type="PROSITE" id="PS00108">
    <property type="entry name" value="PROTEIN_KINASE_ST"/>
    <property type="match status" value="2"/>
</dbReference>
<name>KS6A6_HUMAN</name>
<gene>
    <name type="primary">RPS6KA6</name>
    <name type="synonym">RSK4</name>
</gene>